<proteinExistence type="predicted"/>
<comment type="subcellular location">
    <subcellularLocation>
        <location evidence="3">Membrane</location>
        <topology evidence="3">Multi-pass membrane protein</topology>
    </subcellularLocation>
</comment>
<gene>
    <name type="ORF">B0416.5</name>
</gene>
<name>YT45_CAEEL</name>
<reference key="1">
    <citation type="journal article" date="1998" name="Science">
        <title>Genome sequence of the nematode C. elegans: a platform for investigating biology.</title>
        <authorList>
            <consortium name="The C. elegans sequencing consortium"/>
        </authorList>
    </citation>
    <scope>NUCLEOTIDE SEQUENCE [LARGE SCALE GENOMIC DNA]</scope>
    <source>
        <strain>Bristol N2</strain>
    </source>
</reference>
<sequence length="507" mass="55150">MGADDGAISADKVDIRLQPLNKNGAQDETDEEAADQIQLRVYKQRWIVLLAVALLNNTNTMSWIGYAPSGNYVNSFYGESSAAWLSMVYMMCTIPVGMFAMWAGREWGLRTAVLIAGWANGIGAVIRVISSLDFVPQDLRFPICMTGQGIAAIAYPFIMFLPTKVAGSWFPDTQRAIATSIGVMSNPLGVLMANLISPAIVKSPEHVIWLNIFTCVPSLIAMLIATFGVNRSEPKIPPTFSASKPQMDFVSGMKSCFSSKQYIILLIVMGGGIGMFNCLYTVMLELLCPSGYSNFFSGVCAALMIVGGVFGAAASSIFVDRTKLYEETLKIALGAAVIFGLIFLQLTLHQGYSVILGVTCLLFGVLGLATYPIGLELASECTFPVSEATSTGLIVLSGQIQSVIYVFIMKNFARPLQPDRMHIQVCQLTPDDTINTPKDNTMSIMIFSLLATLLVLTLVVLFKPVYKRLEAERGNRATADKAKELSNQNKDRITLQAESAVEPLQKK</sequence>
<keyword id="KW-0472">Membrane</keyword>
<keyword id="KW-1185">Reference proteome</keyword>
<keyword id="KW-0812">Transmembrane</keyword>
<keyword id="KW-1133">Transmembrane helix</keyword>
<protein>
    <recommendedName>
        <fullName>Uncharacterized protein B0416.5</fullName>
    </recommendedName>
</protein>
<evidence type="ECO:0000255" key="1"/>
<evidence type="ECO:0000256" key="2">
    <source>
        <dbReference type="SAM" id="MobiDB-lite"/>
    </source>
</evidence>
<evidence type="ECO:0000305" key="3"/>
<organism>
    <name type="scientific">Caenorhabditis elegans</name>
    <dbReference type="NCBI Taxonomy" id="6239"/>
    <lineage>
        <taxon>Eukaryota</taxon>
        <taxon>Metazoa</taxon>
        <taxon>Ecdysozoa</taxon>
        <taxon>Nematoda</taxon>
        <taxon>Chromadorea</taxon>
        <taxon>Rhabditida</taxon>
        <taxon>Rhabditina</taxon>
        <taxon>Rhabditomorpha</taxon>
        <taxon>Rhabditoidea</taxon>
        <taxon>Rhabditidae</taxon>
        <taxon>Peloderinae</taxon>
        <taxon>Caenorhabditis</taxon>
    </lineage>
</organism>
<accession>Q11073</accession>
<feature type="chain" id="PRO_0000065081" description="Uncharacterized protein B0416.5">
    <location>
        <begin position="1"/>
        <end position="507"/>
    </location>
</feature>
<feature type="transmembrane region" description="Helical" evidence="1">
    <location>
        <begin position="46"/>
        <end position="66"/>
    </location>
</feature>
<feature type="transmembrane region" description="Helical" evidence="1">
    <location>
        <begin position="83"/>
        <end position="103"/>
    </location>
</feature>
<feature type="transmembrane region" description="Helical" evidence="1">
    <location>
        <begin position="112"/>
        <end position="132"/>
    </location>
</feature>
<feature type="transmembrane region" description="Helical" evidence="1">
    <location>
        <begin position="141"/>
        <end position="161"/>
    </location>
</feature>
<feature type="transmembrane region" description="Helical" evidence="1">
    <location>
        <begin position="181"/>
        <end position="201"/>
    </location>
</feature>
<feature type="transmembrane region" description="Helical" evidence="1">
    <location>
        <begin position="207"/>
        <end position="227"/>
    </location>
</feature>
<feature type="transmembrane region" description="Helical" evidence="1">
    <location>
        <begin position="263"/>
        <end position="283"/>
    </location>
</feature>
<feature type="transmembrane region" description="Helical" evidence="1">
    <location>
        <begin position="299"/>
        <end position="319"/>
    </location>
</feature>
<feature type="transmembrane region" description="Helical" evidence="1">
    <location>
        <begin position="328"/>
        <end position="348"/>
    </location>
</feature>
<feature type="transmembrane region" description="Helical" evidence="1">
    <location>
        <begin position="354"/>
        <end position="374"/>
    </location>
</feature>
<feature type="transmembrane region" description="Helical" evidence="1">
    <location>
        <begin position="389"/>
        <end position="409"/>
    </location>
</feature>
<feature type="transmembrane region" description="Helical" evidence="1">
    <location>
        <begin position="442"/>
        <end position="462"/>
    </location>
</feature>
<feature type="region of interest" description="Disordered" evidence="2">
    <location>
        <begin position="477"/>
        <end position="507"/>
    </location>
</feature>
<feature type="compositionally biased region" description="Basic and acidic residues" evidence="2">
    <location>
        <begin position="477"/>
        <end position="493"/>
    </location>
</feature>
<dbReference type="EMBL" id="FO080200">
    <property type="protein sequence ID" value="CCD61923.1"/>
    <property type="molecule type" value="Genomic_DNA"/>
</dbReference>
<dbReference type="PIR" id="B89606">
    <property type="entry name" value="B89606"/>
</dbReference>
<dbReference type="RefSeq" id="NP_509562.1">
    <property type="nucleotide sequence ID" value="NM_077161.7"/>
</dbReference>
<dbReference type="SMR" id="Q11073"/>
<dbReference type="BioGRID" id="46074">
    <property type="interactions" value="3"/>
</dbReference>
<dbReference type="DIP" id="DIP-27083N"/>
<dbReference type="FunCoup" id="Q11073">
    <property type="interactions" value="9"/>
</dbReference>
<dbReference type="STRING" id="6239.B0416.5a.1"/>
<dbReference type="iPTMnet" id="Q11073"/>
<dbReference type="PaxDb" id="6239-B0416.5a"/>
<dbReference type="PeptideAtlas" id="Q11073"/>
<dbReference type="EnsemblMetazoa" id="B0416.5.1">
    <property type="protein sequence ID" value="B0416.5.1"/>
    <property type="gene ID" value="WBGene00015181"/>
</dbReference>
<dbReference type="GeneID" id="181158"/>
<dbReference type="KEGG" id="cel:CELE_B0416.5"/>
<dbReference type="UCSC" id="B0416.5a">
    <property type="organism name" value="c. elegans"/>
</dbReference>
<dbReference type="AGR" id="WB:WBGene00015181"/>
<dbReference type="CTD" id="181158"/>
<dbReference type="WormBase" id="B0416.5">
    <property type="protein sequence ID" value="CE02435"/>
    <property type="gene ID" value="WBGene00015181"/>
</dbReference>
<dbReference type="eggNOG" id="KOG2563">
    <property type="taxonomic scope" value="Eukaryota"/>
</dbReference>
<dbReference type="GeneTree" id="ENSGT01030000234625"/>
<dbReference type="HOGENOM" id="CLU_023132_3_2_1"/>
<dbReference type="InParanoid" id="Q11073"/>
<dbReference type="OMA" id="CAYPFIM"/>
<dbReference type="OrthoDB" id="422206at2759"/>
<dbReference type="PhylomeDB" id="Q11073"/>
<dbReference type="PRO" id="PR:Q11073"/>
<dbReference type="Proteomes" id="UP000001940">
    <property type="component" value="Chromosome X"/>
</dbReference>
<dbReference type="Bgee" id="WBGene00015181">
    <property type="expression patterns" value="Expressed in embryo and 4 other cell types or tissues"/>
</dbReference>
<dbReference type="GO" id="GO:0016020">
    <property type="term" value="C:membrane"/>
    <property type="evidence" value="ECO:0000318"/>
    <property type="project" value="GO_Central"/>
</dbReference>
<dbReference type="GO" id="GO:0022857">
    <property type="term" value="F:transmembrane transporter activity"/>
    <property type="evidence" value="ECO:0007669"/>
    <property type="project" value="InterPro"/>
</dbReference>
<dbReference type="CDD" id="cd17399">
    <property type="entry name" value="MFS_MFSD7"/>
    <property type="match status" value="1"/>
</dbReference>
<dbReference type="Gene3D" id="1.20.1250.20">
    <property type="entry name" value="MFS general substrate transporter like domains"/>
    <property type="match status" value="1"/>
</dbReference>
<dbReference type="InterPro" id="IPR049680">
    <property type="entry name" value="FLVCR1-2_SLC49-like"/>
</dbReference>
<dbReference type="InterPro" id="IPR011701">
    <property type="entry name" value="MFS"/>
</dbReference>
<dbReference type="InterPro" id="IPR036259">
    <property type="entry name" value="MFS_trans_sf"/>
</dbReference>
<dbReference type="PANTHER" id="PTHR10924">
    <property type="entry name" value="MAJOR FACILITATOR SUPERFAMILY PROTEIN-RELATED"/>
    <property type="match status" value="1"/>
</dbReference>
<dbReference type="PANTHER" id="PTHR10924:SF6">
    <property type="entry name" value="SOLUTE CARRIER FAMILY 49 MEMBER A3"/>
    <property type="match status" value="1"/>
</dbReference>
<dbReference type="Pfam" id="PF07690">
    <property type="entry name" value="MFS_1"/>
    <property type="match status" value="1"/>
</dbReference>
<dbReference type="SUPFAM" id="SSF103473">
    <property type="entry name" value="MFS general substrate transporter"/>
    <property type="match status" value="1"/>
</dbReference>